<accession>A1AIG6</accession>
<comment type="function">
    <text evidence="1">Binds RpoD and negatively regulates RpoD-mediated transcription activation by preventing the interaction between the primary sigma factor RpoD with the catalytic core of the RNA polymerase and with promoter DNA. May be involved in replacement of the RNA polymerase sigma subunit from RpoD to RpoS during the transition from exponential growth to the stationary phase.</text>
</comment>
<comment type="subunit">
    <text evidence="1">Interacts with RpoD.</text>
</comment>
<comment type="subcellular location">
    <subcellularLocation>
        <location evidence="1">Cytoplasm</location>
    </subcellularLocation>
</comment>
<comment type="similarity">
    <text evidence="1">Belongs to the Rsd/AlgQ family.</text>
</comment>
<evidence type="ECO:0000255" key="1">
    <source>
        <dbReference type="HAMAP-Rule" id="MF_01181"/>
    </source>
</evidence>
<sequence>MLNQLDNLTERVRGSNKLVDRWLHVRKHLLVAYYNLVGIKPGKESYMRLNEKALDDFCQSLVDYLSAGHFSIYERILHKLEGNGQLARAAKIWPQLEANTQQIMDDYDSSLETAIDHDNYLEFQQVLSDIGEALEARFVLEDKLILLVLDAARVKYPA</sequence>
<protein>
    <recommendedName>
        <fullName evidence="1">Regulator of sigma D</fullName>
    </recommendedName>
</protein>
<keyword id="KW-0963">Cytoplasm</keyword>
<keyword id="KW-1185">Reference proteome</keyword>
<keyword id="KW-0804">Transcription</keyword>
<keyword id="KW-0805">Transcription regulation</keyword>
<dbReference type="EMBL" id="CP000468">
    <property type="protein sequence ID" value="ABJ03456.1"/>
    <property type="molecule type" value="Genomic_DNA"/>
</dbReference>
<dbReference type="RefSeq" id="WP_000934300.1">
    <property type="nucleotide sequence ID" value="NZ_CADILS010000053.1"/>
</dbReference>
<dbReference type="SMR" id="A1AIG6"/>
<dbReference type="KEGG" id="ecv:APECO1_2480"/>
<dbReference type="HOGENOM" id="CLU_142729_0_0_6"/>
<dbReference type="Proteomes" id="UP000008216">
    <property type="component" value="Chromosome"/>
</dbReference>
<dbReference type="GO" id="GO:0005737">
    <property type="term" value="C:cytoplasm"/>
    <property type="evidence" value="ECO:0007669"/>
    <property type="project" value="UniProtKB-SubCell"/>
</dbReference>
<dbReference type="GO" id="GO:0006355">
    <property type="term" value="P:regulation of DNA-templated transcription"/>
    <property type="evidence" value="ECO:0007669"/>
    <property type="project" value="InterPro"/>
</dbReference>
<dbReference type="FunFam" id="1.20.120.1370:FF:000001">
    <property type="entry name" value="Regulator of sigma D"/>
    <property type="match status" value="1"/>
</dbReference>
<dbReference type="Gene3D" id="1.20.120.1370">
    <property type="entry name" value="Regulator of RNA polymerase sigma(70) subunit, domain 4"/>
    <property type="match status" value="1"/>
</dbReference>
<dbReference type="HAMAP" id="MF_01181">
    <property type="entry name" value="Rsd"/>
    <property type="match status" value="1"/>
</dbReference>
<dbReference type="InterPro" id="IPR038309">
    <property type="entry name" value="Rsd/AlgQ_sf"/>
</dbReference>
<dbReference type="InterPro" id="IPR023785">
    <property type="entry name" value="Sigma70_reg_Rsd"/>
</dbReference>
<dbReference type="InterPro" id="IPR007448">
    <property type="entry name" value="Sigma70_reg_Rsd_AlgQ"/>
</dbReference>
<dbReference type="NCBIfam" id="NF008723">
    <property type="entry name" value="PRK11718.1"/>
    <property type="match status" value="1"/>
</dbReference>
<dbReference type="Pfam" id="PF04353">
    <property type="entry name" value="Rsd_AlgQ"/>
    <property type="match status" value="1"/>
</dbReference>
<dbReference type="PIRSF" id="PIRSF016548">
    <property type="entry name" value="Rsd_AlgQ"/>
    <property type="match status" value="1"/>
</dbReference>
<organism>
    <name type="scientific">Escherichia coli O1:K1 / APEC</name>
    <dbReference type="NCBI Taxonomy" id="405955"/>
    <lineage>
        <taxon>Bacteria</taxon>
        <taxon>Pseudomonadati</taxon>
        <taxon>Pseudomonadota</taxon>
        <taxon>Gammaproteobacteria</taxon>
        <taxon>Enterobacterales</taxon>
        <taxon>Enterobacteriaceae</taxon>
        <taxon>Escherichia</taxon>
    </lineage>
</organism>
<reference key="1">
    <citation type="journal article" date="2007" name="J. Bacteriol.">
        <title>The genome sequence of avian pathogenic Escherichia coli strain O1:K1:H7 shares strong similarities with human extraintestinal pathogenic E. coli genomes.</title>
        <authorList>
            <person name="Johnson T.J."/>
            <person name="Kariyawasam S."/>
            <person name="Wannemuehler Y."/>
            <person name="Mangiamele P."/>
            <person name="Johnson S.J."/>
            <person name="Doetkott C."/>
            <person name="Skyberg J.A."/>
            <person name="Lynne A.M."/>
            <person name="Johnson J.R."/>
            <person name="Nolan L.K."/>
        </authorList>
    </citation>
    <scope>NUCLEOTIDE SEQUENCE [LARGE SCALE GENOMIC DNA]</scope>
</reference>
<feature type="chain" id="PRO_1000065795" description="Regulator of sigma D">
    <location>
        <begin position="1"/>
        <end position="158"/>
    </location>
</feature>
<proteinExistence type="inferred from homology"/>
<name>RSD_ECOK1</name>
<gene>
    <name evidence="1" type="primary">rsd</name>
    <name type="ordered locus">Ecok1_39620</name>
    <name type="ORF">APECO1_2480</name>
</gene>